<sequence>MTDKIRTVQGKVVSDKMDKSFVVAIERTVKHPLYGKFIRRTTKLHVHDENNEAKLGDVVEIKECRPVSKTKSHTLVRVVEKAVA</sequence>
<evidence type="ECO:0000255" key="1">
    <source>
        <dbReference type="HAMAP-Rule" id="MF_01345"/>
    </source>
</evidence>
<evidence type="ECO:0000305" key="2"/>
<reference key="1">
    <citation type="journal article" date="2008" name="PLoS ONE">
        <title>Genome biology of Actinobacillus pleuropneumoniae JL03, an isolate of serotype 3 prevalent in China.</title>
        <authorList>
            <person name="Xu Z."/>
            <person name="Zhou Y."/>
            <person name="Li L."/>
            <person name="Zhou R."/>
            <person name="Xiao S."/>
            <person name="Wan Y."/>
            <person name="Zhang S."/>
            <person name="Wang K."/>
            <person name="Li W."/>
            <person name="Li L."/>
            <person name="Jin H."/>
            <person name="Kang M."/>
            <person name="Dalai B."/>
            <person name="Li T."/>
            <person name="Liu L."/>
            <person name="Cheng Y."/>
            <person name="Zhang L."/>
            <person name="Xu T."/>
            <person name="Zheng H."/>
            <person name="Pu S."/>
            <person name="Wang B."/>
            <person name="Gu W."/>
            <person name="Zhang X.L."/>
            <person name="Zhu G.-F."/>
            <person name="Wang S."/>
            <person name="Zhao G.-P."/>
            <person name="Chen H."/>
        </authorList>
    </citation>
    <scope>NUCLEOTIDE SEQUENCE [LARGE SCALE GENOMIC DNA]</scope>
    <source>
        <strain>JL03</strain>
    </source>
</reference>
<dbReference type="EMBL" id="CP000687">
    <property type="protein sequence ID" value="ABY70354.1"/>
    <property type="molecule type" value="Genomic_DNA"/>
</dbReference>
<dbReference type="RefSeq" id="WP_005599296.1">
    <property type="nucleotide sequence ID" value="NC_010278.1"/>
</dbReference>
<dbReference type="SMR" id="B0BSU0"/>
<dbReference type="GeneID" id="48600061"/>
<dbReference type="KEGG" id="apj:APJL_1804"/>
<dbReference type="HOGENOM" id="CLU_073626_1_1_6"/>
<dbReference type="Proteomes" id="UP000008547">
    <property type="component" value="Chromosome"/>
</dbReference>
<dbReference type="GO" id="GO:0022627">
    <property type="term" value="C:cytosolic small ribosomal subunit"/>
    <property type="evidence" value="ECO:0007669"/>
    <property type="project" value="TreeGrafter"/>
</dbReference>
<dbReference type="GO" id="GO:0019843">
    <property type="term" value="F:rRNA binding"/>
    <property type="evidence" value="ECO:0007669"/>
    <property type="project" value="UniProtKB-UniRule"/>
</dbReference>
<dbReference type="GO" id="GO:0003735">
    <property type="term" value="F:structural constituent of ribosome"/>
    <property type="evidence" value="ECO:0007669"/>
    <property type="project" value="InterPro"/>
</dbReference>
<dbReference type="GO" id="GO:0006412">
    <property type="term" value="P:translation"/>
    <property type="evidence" value="ECO:0007669"/>
    <property type="project" value="UniProtKB-UniRule"/>
</dbReference>
<dbReference type="CDD" id="cd00364">
    <property type="entry name" value="Ribosomal_uS17"/>
    <property type="match status" value="1"/>
</dbReference>
<dbReference type="FunFam" id="2.40.50.140:FF:000014">
    <property type="entry name" value="30S ribosomal protein S17"/>
    <property type="match status" value="1"/>
</dbReference>
<dbReference type="Gene3D" id="2.40.50.140">
    <property type="entry name" value="Nucleic acid-binding proteins"/>
    <property type="match status" value="1"/>
</dbReference>
<dbReference type="HAMAP" id="MF_01345_B">
    <property type="entry name" value="Ribosomal_uS17_B"/>
    <property type="match status" value="1"/>
</dbReference>
<dbReference type="InterPro" id="IPR012340">
    <property type="entry name" value="NA-bd_OB-fold"/>
</dbReference>
<dbReference type="InterPro" id="IPR000266">
    <property type="entry name" value="Ribosomal_uS17"/>
</dbReference>
<dbReference type="InterPro" id="IPR019984">
    <property type="entry name" value="Ribosomal_uS17_bact/chlr"/>
</dbReference>
<dbReference type="InterPro" id="IPR019979">
    <property type="entry name" value="Ribosomal_uS17_CS"/>
</dbReference>
<dbReference type="NCBIfam" id="NF004123">
    <property type="entry name" value="PRK05610.1"/>
    <property type="match status" value="1"/>
</dbReference>
<dbReference type="NCBIfam" id="TIGR03635">
    <property type="entry name" value="uS17_bact"/>
    <property type="match status" value="1"/>
</dbReference>
<dbReference type="PANTHER" id="PTHR10744">
    <property type="entry name" value="40S RIBOSOMAL PROTEIN S11 FAMILY MEMBER"/>
    <property type="match status" value="1"/>
</dbReference>
<dbReference type="PANTHER" id="PTHR10744:SF1">
    <property type="entry name" value="SMALL RIBOSOMAL SUBUNIT PROTEIN US17M"/>
    <property type="match status" value="1"/>
</dbReference>
<dbReference type="Pfam" id="PF00366">
    <property type="entry name" value="Ribosomal_S17"/>
    <property type="match status" value="1"/>
</dbReference>
<dbReference type="PRINTS" id="PR00973">
    <property type="entry name" value="RIBOSOMALS17"/>
</dbReference>
<dbReference type="SUPFAM" id="SSF50249">
    <property type="entry name" value="Nucleic acid-binding proteins"/>
    <property type="match status" value="1"/>
</dbReference>
<dbReference type="PROSITE" id="PS00056">
    <property type="entry name" value="RIBOSOMAL_S17"/>
    <property type="match status" value="1"/>
</dbReference>
<gene>
    <name evidence="1" type="primary">rpsQ</name>
    <name type="ordered locus">APJL_1804</name>
</gene>
<protein>
    <recommendedName>
        <fullName evidence="1">Small ribosomal subunit protein uS17</fullName>
    </recommendedName>
    <alternativeName>
        <fullName evidence="2">30S ribosomal protein S17</fullName>
    </alternativeName>
</protein>
<accession>B0BSU0</accession>
<comment type="function">
    <text evidence="1">One of the primary rRNA binding proteins, it binds specifically to the 5'-end of 16S ribosomal RNA.</text>
</comment>
<comment type="subunit">
    <text evidence="1">Part of the 30S ribosomal subunit.</text>
</comment>
<comment type="similarity">
    <text evidence="1">Belongs to the universal ribosomal protein uS17 family.</text>
</comment>
<proteinExistence type="inferred from homology"/>
<feature type="chain" id="PRO_1000143213" description="Small ribosomal subunit protein uS17">
    <location>
        <begin position="1"/>
        <end position="84"/>
    </location>
</feature>
<organism>
    <name type="scientific">Actinobacillus pleuropneumoniae serotype 3 (strain JL03)</name>
    <dbReference type="NCBI Taxonomy" id="434271"/>
    <lineage>
        <taxon>Bacteria</taxon>
        <taxon>Pseudomonadati</taxon>
        <taxon>Pseudomonadota</taxon>
        <taxon>Gammaproteobacteria</taxon>
        <taxon>Pasteurellales</taxon>
        <taxon>Pasteurellaceae</taxon>
        <taxon>Actinobacillus</taxon>
    </lineage>
</organism>
<keyword id="KW-0687">Ribonucleoprotein</keyword>
<keyword id="KW-0689">Ribosomal protein</keyword>
<keyword id="KW-0694">RNA-binding</keyword>
<keyword id="KW-0699">rRNA-binding</keyword>
<name>RS17_ACTPJ</name>